<reference evidence="5 6" key="1">
    <citation type="journal article" date="2000" name="Proc. Natl. Acad. Sci. U.S.A.">
        <title>c-Mos forces the mitotic cell cycle to undergo meiosis II to produce haploid gametes.</title>
        <authorList>
            <person name="Tachibana K."/>
            <person name="Tanaka D."/>
            <person name="Isobe T."/>
            <person name="Kishimoto T."/>
        </authorList>
    </citation>
    <scope>NUCLEOTIDE SEQUENCE [MRNA]</scope>
    <scope>FUNCTION</scope>
    <scope>DEVELOPMENTAL STAGE</scope>
    <source>
        <tissue evidence="4">Oocyte</tissue>
    </source>
</reference>
<organism>
    <name type="scientific">Patiria pectinifera</name>
    <name type="common">Starfish</name>
    <name type="synonym">Asterina pectinifera</name>
    <dbReference type="NCBI Taxonomy" id="7594"/>
    <lineage>
        <taxon>Eukaryota</taxon>
        <taxon>Metazoa</taxon>
        <taxon>Echinodermata</taxon>
        <taxon>Eleutherozoa</taxon>
        <taxon>Asterozoa</taxon>
        <taxon>Asteroidea</taxon>
        <taxon>Valvatacea</taxon>
        <taxon>Valvatida</taxon>
        <taxon>Asterinidae</taxon>
        <taxon>Patiria</taxon>
    </lineage>
</organism>
<gene>
    <name evidence="6" type="primary">mos</name>
</gene>
<feature type="chain" id="PRO_0000419763" description="Serine/threonine-protein kinase mos">
    <location>
        <begin position="1"/>
        <end position="351"/>
    </location>
</feature>
<feature type="domain" description="Protein kinase" evidence="2">
    <location>
        <begin position="71"/>
        <end position="340"/>
    </location>
</feature>
<feature type="active site" description="Proton acceptor" evidence="1 2 3">
    <location>
        <position position="194"/>
    </location>
</feature>
<feature type="binding site" evidence="1 2">
    <location>
        <begin position="77"/>
        <end position="85"/>
    </location>
    <ligand>
        <name>ATP</name>
        <dbReference type="ChEBI" id="CHEBI:30616"/>
    </ligand>
</feature>
<feature type="binding site" evidence="1 2">
    <location>
        <position position="98"/>
    </location>
    <ligand>
        <name>ATP</name>
        <dbReference type="ChEBI" id="CHEBI:30616"/>
    </ligand>
</feature>
<keyword id="KW-0067">ATP-binding</keyword>
<keyword id="KW-0418">Kinase</keyword>
<keyword id="KW-0547">Nucleotide-binding</keyword>
<keyword id="KW-0723">Serine/threonine-protein kinase</keyword>
<keyword id="KW-0808">Transferase</keyword>
<evidence type="ECO:0000250" key="1">
    <source>
        <dbReference type="UniProtKB" id="P10741"/>
    </source>
</evidence>
<evidence type="ECO:0000255" key="2">
    <source>
        <dbReference type="PROSITE-ProRule" id="PRU00159"/>
    </source>
</evidence>
<evidence type="ECO:0000255" key="3">
    <source>
        <dbReference type="PROSITE-ProRule" id="PRU10027"/>
    </source>
</evidence>
<evidence type="ECO:0000269" key="4">
    <source>
    </source>
</evidence>
<evidence type="ECO:0000305" key="5"/>
<evidence type="ECO:0000312" key="6">
    <source>
        <dbReference type="EMBL" id="BAB13700.1"/>
    </source>
</evidence>
<accession>Q9GRC0</accession>
<sequence>MPCDTADNWARYEGQDNAIMVARRGSVNSAFVTNSSQYHQAEDTNGNCFINARNDNWDNRDCNACVGHSDFSIDGVIGSGGFGSVFLGRYCGRRVAVKSVRQCSRNKEASRQSFQAEFNALLLRHDNIVSVLATTAYEDFDSGAFIIMEYAGRNLQQIVNDPGSSLSPTRRTKYALHIIRALHYTHSQGIAHLDVKPANVIVDSNTDVCRLADFGCSQRVSEGEGRDSFTSRSYLTGTFAYRAPELLRGRPPTTKADIYSYGVTLWQMLTRETPFAGENHHVVIFGVVAQNLRPSLPENANDAWYESLVTRCWEGRVADRPSAAEILLALERRTDDTENLPRDLKRRHGTT</sequence>
<comment type="function">
    <text evidence="4">Suppresses the mitotic cell cycle in oocytes, forcing them to undergo meiosis II to produce haploid gametes. Acts as a MAPK kinase kinase (MAP3K) that acts upstream of MAP kinase in oocytes.</text>
</comment>
<comment type="catalytic activity">
    <reaction evidence="1">
        <text>L-seryl-[protein] + ATP = O-phospho-L-seryl-[protein] + ADP + H(+)</text>
        <dbReference type="Rhea" id="RHEA:17989"/>
        <dbReference type="Rhea" id="RHEA-COMP:9863"/>
        <dbReference type="Rhea" id="RHEA-COMP:11604"/>
        <dbReference type="ChEBI" id="CHEBI:15378"/>
        <dbReference type="ChEBI" id="CHEBI:29999"/>
        <dbReference type="ChEBI" id="CHEBI:30616"/>
        <dbReference type="ChEBI" id="CHEBI:83421"/>
        <dbReference type="ChEBI" id="CHEBI:456216"/>
        <dbReference type="EC" id="2.7.11.1"/>
    </reaction>
</comment>
<comment type="catalytic activity">
    <reaction evidence="1">
        <text>L-threonyl-[protein] + ATP = O-phospho-L-threonyl-[protein] + ADP + H(+)</text>
        <dbReference type="Rhea" id="RHEA:46608"/>
        <dbReference type="Rhea" id="RHEA-COMP:11060"/>
        <dbReference type="Rhea" id="RHEA-COMP:11605"/>
        <dbReference type="ChEBI" id="CHEBI:15378"/>
        <dbReference type="ChEBI" id="CHEBI:30013"/>
        <dbReference type="ChEBI" id="CHEBI:30616"/>
        <dbReference type="ChEBI" id="CHEBI:61977"/>
        <dbReference type="ChEBI" id="CHEBI:456216"/>
        <dbReference type="EC" id="2.7.11.1"/>
    </reaction>
</comment>
<comment type="developmental stage">
    <text evidence="4">Expression is first detected in immature oocytes just after germinal vesicle breakdown (GVBD). Expression remains throughout both meiotic cycles, unless fertilization occurs, and disappears after fertilization (at protein level).</text>
</comment>
<comment type="similarity">
    <text evidence="2">Belongs to the protein kinase superfamily. Ser/Thr protein kinase family.</text>
</comment>
<name>MOS_PATPE</name>
<dbReference type="EC" id="2.7.11.1" evidence="1"/>
<dbReference type="EMBL" id="AB040102">
    <property type="protein sequence ID" value="BAB13700.1"/>
    <property type="molecule type" value="mRNA"/>
</dbReference>
<dbReference type="SMR" id="Q9GRC0"/>
<dbReference type="GO" id="GO:0005524">
    <property type="term" value="F:ATP binding"/>
    <property type="evidence" value="ECO:0007669"/>
    <property type="project" value="UniProtKB-KW"/>
</dbReference>
<dbReference type="GO" id="GO:0004709">
    <property type="term" value="F:MAP kinase kinase kinase activity"/>
    <property type="evidence" value="ECO:0000314"/>
    <property type="project" value="UniProtKB"/>
</dbReference>
<dbReference type="GO" id="GO:0106310">
    <property type="term" value="F:protein serine kinase activity"/>
    <property type="evidence" value="ECO:0007669"/>
    <property type="project" value="RHEA"/>
</dbReference>
<dbReference type="GO" id="GO:0007292">
    <property type="term" value="P:female gamete generation"/>
    <property type="evidence" value="ECO:0000314"/>
    <property type="project" value="UniProtKB"/>
</dbReference>
<dbReference type="GO" id="GO:0007147">
    <property type="term" value="P:female meiosis II"/>
    <property type="evidence" value="ECO:0000314"/>
    <property type="project" value="UniProtKB"/>
</dbReference>
<dbReference type="GO" id="GO:0045930">
    <property type="term" value="P:negative regulation of mitotic cell cycle"/>
    <property type="evidence" value="ECO:0000314"/>
    <property type="project" value="UniProtKB"/>
</dbReference>
<dbReference type="CDD" id="cd13979">
    <property type="entry name" value="STKc_Mos"/>
    <property type="match status" value="1"/>
</dbReference>
<dbReference type="FunFam" id="1.10.510.10:FF:000490">
    <property type="entry name" value="Proto-oncogene serine/threonine-protein kinase mos"/>
    <property type="match status" value="1"/>
</dbReference>
<dbReference type="Gene3D" id="3.30.200.20">
    <property type="entry name" value="Phosphorylase Kinase, domain 1"/>
    <property type="match status" value="1"/>
</dbReference>
<dbReference type="Gene3D" id="1.10.510.10">
    <property type="entry name" value="Transferase(Phosphotransferase) domain 1"/>
    <property type="match status" value="1"/>
</dbReference>
<dbReference type="InterPro" id="IPR011009">
    <property type="entry name" value="Kinase-like_dom_sf"/>
</dbReference>
<dbReference type="InterPro" id="IPR000719">
    <property type="entry name" value="Prot_kinase_dom"/>
</dbReference>
<dbReference type="InterPro" id="IPR017441">
    <property type="entry name" value="Protein_kinase_ATP_BS"/>
</dbReference>
<dbReference type="InterPro" id="IPR008271">
    <property type="entry name" value="Ser/Thr_kinase_AS"/>
</dbReference>
<dbReference type="InterPro" id="IPR051681">
    <property type="entry name" value="Ser/Thr_Kinases-Pseudokinases"/>
</dbReference>
<dbReference type="PANTHER" id="PTHR44329">
    <property type="entry name" value="SERINE/THREONINE-PROTEIN KINASE TNNI3K-RELATED"/>
    <property type="match status" value="1"/>
</dbReference>
<dbReference type="PANTHER" id="PTHR44329:SF285">
    <property type="entry name" value="V-MOS MOLONEY MURINE SARCOMA VIRAL ONCO HOMOLOG"/>
    <property type="match status" value="1"/>
</dbReference>
<dbReference type="Pfam" id="PF00069">
    <property type="entry name" value="Pkinase"/>
    <property type="match status" value="1"/>
</dbReference>
<dbReference type="SMART" id="SM00220">
    <property type="entry name" value="S_TKc"/>
    <property type="match status" value="1"/>
</dbReference>
<dbReference type="SUPFAM" id="SSF56112">
    <property type="entry name" value="Protein kinase-like (PK-like)"/>
    <property type="match status" value="1"/>
</dbReference>
<dbReference type="PROSITE" id="PS00107">
    <property type="entry name" value="PROTEIN_KINASE_ATP"/>
    <property type="match status" value="1"/>
</dbReference>
<dbReference type="PROSITE" id="PS50011">
    <property type="entry name" value="PROTEIN_KINASE_DOM"/>
    <property type="match status" value="1"/>
</dbReference>
<dbReference type="PROSITE" id="PS00108">
    <property type="entry name" value="PROTEIN_KINASE_ST"/>
    <property type="match status" value="1"/>
</dbReference>
<proteinExistence type="evidence at protein level"/>
<protein>
    <recommendedName>
        <fullName evidence="1">Serine/threonine-protein kinase mos</fullName>
        <ecNumber evidence="1">2.7.11.1</ecNumber>
    </recommendedName>
    <alternativeName>
        <fullName evidence="1">Oocyte maturation factor mos</fullName>
    </alternativeName>
</protein>